<evidence type="ECO:0000255" key="1">
    <source>
        <dbReference type="HAMAP-Rule" id="MF_00361"/>
    </source>
</evidence>
<gene>
    <name evidence="1" type="primary">nadK</name>
    <name type="ordered locus">Ecok1_25410</name>
    <name type="ORF">APECO1_3919</name>
</gene>
<comment type="function">
    <text evidence="1">Involved in the regulation of the intracellular balance of NAD and NADP, and is a key enzyme in the biosynthesis of NADP. Catalyzes specifically the phosphorylation on 2'-hydroxyl of the adenosine moiety of NAD to yield NADP.</text>
</comment>
<comment type="catalytic activity">
    <reaction evidence="1">
        <text>NAD(+) + ATP = ADP + NADP(+) + H(+)</text>
        <dbReference type="Rhea" id="RHEA:18629"/>
        <dbReference type="ChEBI" id="CHEBI:15378"/>
        <dbReference type="ChEBI" id="CHEBI:30616"/>
        <dbReference type="ChEBI" id="CHEBI:57540"/>
        <dbReference type="ChEBI" id="CHEBI:58349"/>
        <dbReference type="ChEBI" id="CHEBI:456216"/>
        <dbReference type="EC" id="2.7.1.23"/>
    </reaction>
</comment>
<comment type="cofactor">
    <cofactor evidence="1">
        <name>a divalent metal cation</name>
        <dbReference type="ChEBI" id="CHEBI:60240"/>
    </cofactor>
</comment>
<comment type="subcellular location">
    <subcellularLocation>
        <location evidence="1">Cytoplasm</location>
    </subcellularLocation>
</comment>
<comment type="similarity">
    <text evidence="1">Belongs to the NAD kinase family.</text>
</comment>
<proteinExistence type="inferred from homology"/>
<reference key="1">
    <citation type="journal article" date="2007" name="J. Bacteriol.">
        <title>The genome sequence of avian pathogenic Escherichia coli strain O1:K1:H7 shares strong similarities with human extraintestinal pathogenic E. coli genomes.</title>
        <authorList>
            <person name="Johnson T.J."/>
            <person name="Kariyawasam S."/>
            <person name="Wannemuehler Y."/>
            <person name="Mangiamele P."/>
            <person name="Johnson S.J."/>
            <person name="Doetkott C."/>
            <person name="Skyberg J.A."/>
            <person name="Lynne A.M."/>
            <person name="Johnson J.R."/>
            <person name="Nolan L.K."/>
        </authorList>
    </citation>
    <scope>NUCLEOTIDE SEQUENCE [LARGE SCALE GENOMIC DNA]</scope>
</reference>
<sequence length="292" mass="32581">MNNHFKCIGIVGHPRHPTALTTHEMLYRWLCTKGYEVIVEQQIAHELQLKNVKTGTLAEIGQQADLAVVVGGDGNMLGAARTLARYDIKVIGINRGNLGFLTDLDPDNAQQQLADVLEGHYISEKRFLLEAQVCQQDCQKRISTAINEVVLHPGKVAHMIEFEVYIDEIFAFSQRSDGLIISTPTGSTAYSLSAGGPILTPSLDAITLVPMFPHTLSARPLVINSSSTIRLRFSHRRNDLEISCDSQIALPIQEGEDVLIRRCDYHLNLIHPKDYSYFNTLSTKLGWSKKLF</sequence>
<protein>
    <recommendedName>
        <fullName evidence="1">NAD kinase</fullName>
        <ecNumber evidence="1">2.7.1.23</ecNumber>
    </recommendedName>
    <alternativeName>
        <fullName evidence="1">ATP-dependent NAD kinase</fullName>
    </alternativeName>
</protein>
<feature type="chain" id="PRO_1000079492" description="NAD kinase">
    <location>
        <begin position="1"/>
        <end position="292"/>
    </location>
</feature>
<feature type="active site" description="Proton acceptor" evidence="1">
    <location>
        <position position="73"/>
    </location>
</feature>
<feature type="binding site" evidence="1">
    <location>
        <begin position="73"/>
        <end position="74"/>
    </location>
    <ligand>
        <name>NAD(+)</name>
        <dbReference type="ChEBI" id="CHEBI:57540"/>
    </ligand>
</feature>
<feature type="binding site" evidence="1">
    <location>
        <begin position="147"/>
        <end position="148"/>
    </location>
    <ligand>
        <name>NAD(+)</name>
        <dbReference type="ChEBI" id="CHEBI:57540"/>
    </ligand>
</feature>
<feature type="binding site" evidence="1">
    <location>
        <position position="158"/>
    </location>
    <ligand>
        <name>NAD(+)</name>
        <dbReference type="ChEBI" id="CHEBI:57540"/>
    </ligand>
</feature>
<feature type="binding site" evidence="1">
    <location>
        <position position="175"/>
    </location>
    <ligand>
        <name>NAD(+)</name>
        <dbReference type="ChEBI" id="CHEBI:57540"/>
    </ligand>
</feature>
<feature type="binding site" evidence="1">
    <location>
        <position position="177"/>
    </location>
    <ligand>
        <name>NAD(+)</name>
        <dbReference type="ChEBI" id="CHEBI:57540"/>
    </ligand>
</feature>
<feature type="binding site" evidence="1">
    <location>
        <begin position="188"/>
        <end position="193"/>
    </location>
    <ligand>
        <name>NAD(+)</name>
        <dbReference type="ChEBI" id="CHEBI:57540"/>
    </ligand>
</feature>
<feature type="binding site" evidence="1">
    <location>
        <position position="247"/>
    </location>
    <ligand>
        <name>NAD(+)</name>
        <dbReference type="ChEBI" id="CHEBI:57540"/>
    </ligand>
</feature>
<name>NADK_ECOK1</name>
<accession>A1AEE5</accession>
<organism>
    <name type="scientific">Escherichia coli O1:K1 / APEC</name>
    <dbReference type="NCBI Taxonomy" id="405955"/>
    <lineage>
        <taxon>Bacteria</taxon>
        <taxon>Pseudomonadati</taxon>
        <taxon>Pseudomonadota</taxon>
        <taxon>Gammaproteobacteria</taxon>
        <taxon>Enterobacterales</taxon>
        <taxon>Enterobacteriaceae</taxon>
        <taxon>Escherichia</taxon>
    </lineage>
</organism>
<keyword id="KW-0067">ATP-binding</keyword>
<keyword id="KW-0963">Cytoplasm</keyword>
<keyword id="KW-0418">Kinase</keyword>
<keyword id="KW-0520">NAD</keyword>
<keyword id="KW-0521">NADP</keyword>
<keyword id="KW-0547">Nucleotide-binding</keyword>
<keyword id="KW-1185">Reference proteome</keyword>
<keyword id="KW-0808">Transferase</keyword>
<dbReference type="EC" id="2.7.1.23" evidence="1"/>
<dbReference type="EMBL" id="CP000468">
    <property type="protein sequence ID" value="ABJ02035.1"/>
    <property type="molecule type" value="Genomic_DNA"/>
</dbReference>
<dbReference type="RefSeq" id="WP_001059176.1">
    <property type="nucleotide sequence ID" value="NZ_CADILS010000033.1"/>
</dbReference>
<dbReference type="SMR" id="A1AEE5"/>
<dbReference type="KEGG" id="ecv:APECO1_3919"/>
<dbReference type="HOGENOM" id="CLU_008831_0_1_6"/>
<dbReference type="Proteomes" id="UP000008216">
    <property type="component" value="Chromosome"/>
</dbReference>
<dbReference type="GO" id="GO:0005737">
    <property type="term" value="C:cytoplasm"/>
    <property type="evidence" value="ECO:0007669"/>
    <property type="project" value="UniProtKB-SubCell"/>
</dbReference>
<dbReference type="GO" id="GO:0005524">
    <property type="term" value="F:ATP binding"/>
    <property type="evidence" value="ECO:0007669"/>
    <property type="project" value="UniProtKB-KW"/>
</dbReference>
<dbReference type="GO" id="GO:0046872">
    <property type="term" value="F:metal ion binding"/>
    <property type="evidence" value="ECO:0007669"/>
    <property type="project" value="UniProtKB-UniRule"/>
</dbReference>
<dbReference type="GO" id="GO:0051287">
    <property type="term" value="F:NAD binding"/>
    <property type="evidence" value="ECO:0007669"/>
    <property type="project" value="UniProtKB-ARBA"/>
</dbReference>
<dbReference type="GO" id="GO:0003951">
    <property type="term" value="F:NAD+ kinase activity"/>
    <property type="evidence" value="ECO:0007669"/>
    <property type="project" value="UniProtKB-UniRule"/>
</dbReference>
<dbReference type="GO" id="GO:0019674">
    <property type="term" value="P:NAD metabolic process"/>
    <property type="evidence" value="ECO:0007669"/>
    <property type="project" value="InterPro"/>
</dbReference>
<dbReference type="GO" id="GO:0006741">
    <property type="term" value="P:NADP biosynthetic process"/>
    <property type="evidence" value="ECO:0007669"/>
    <property type="project" value="UniProtKB-UniRule"/>
</dbReference>
<dbReference type="FunFam" id="2.60.200.30:FF:000001">
    <property type="entry name" value="NAD kinase"/>
    <property type="match status" value="1"/>
</dbReference>
<dbReference type="FunFam" id="3.40.50.10330:FF:000004">
    <property type="entry name" value="NAD kinase"/>
    <property type="match status" value="1"/>
</dbReference>
<dbReference type="Gene3D" id="3.40.50.10330">
    <property type="entry name" value="Probable inorganic polyphosphate/atp-NAD kinase, domain 1"/>
    <property type="match status" value="1"/>
</dbReference>
<dbReference type="Gene3D" id="2.60.200.30">
    <property type="entry name" value="Probable inorganic polyphosphate/atp-NAD kinase, domain 2"/>
    <property type="match status" value="1"/>
</dbReference>
<dbReference type="HAMAP" id="MF_00361">
    <property type="entry name" value="NAD_kinase"/>
    <property type="match status" value="1"/>
</dbReference>
<dbReference type="InterPro" id="IPR017438">
    <property type="entry name" value="ATP-NAD_kinase_N"/>
</dbReference>
<dbReference type="InterPro" id="IPR017437">
    <property type="entry name" value="ATP-NAD_kinase_PpnK-typ_C"/>
</dbReference>
<dbReference type="InterPro" id="IPR016064">
    <property type="entry name" value="NAD/diacylglycerol_kinase_sf"/>
</dbReference>
<dbReference type="InterPro" id="IPR002504">
    <property type="entry name" value="NADK"/>
</dbReference>
<dbReference type="NCBIfam" id="NF002306">
    <property type="entry name" value="PRK01231.1"/>
    <property type="match status" value="1"/>
</dbReference>
<dbReference type="NCBIfam" id="NF002893">
    <property type="entry name" value="PRK03378.1"/>
    <property type="match status" value="1"/>
</dbReference>
<dbReference type="PANTHER" id="PTHR20275">
    <property type="entry name" value="NAD KINASE"/>
    <property type="match status" value="1"/>
</dbReference>
<dbReference type="PANTHER" id="PTHR20275:SF0">
    <property type="entry name" value="NAD KINASE"/>
    <property type="match status" value="1"/>
</dbReference>
<dbReference type="Pfam" id="PF01513">
    <property type="entry name" value="NAD_kinase"/>
    <property type="match status" value="1"/>
</dbReference>
<dbReference type="Pfam" id="PF20143">
    <property type="entry name" value="NAD_kinase_C"/>
    <property type="match status" value="1"/>
</dbReference>
<dbReference type="SUPFAM" id="SSF111331">
    <property type="entry name" value="NAD kinase/diacylglycerol kinase-like"/>
    <property type="match status" value="1"/>
</dbReference>